<name>FLIP_SALTY</name>
<feature type="signal peptide" evidence="3">
    <location>
        <begin position="1"/>
        <end position="21"/>
    </location>
</feature>
<feature type="chain" id="PRO_0000009536" description="Flagellar biosynthetic protein FliP">
    <location>
        <begin position="22"/>
        <end position="245"/>
    </location>
</feature>
<feature type="transmembrane region" description="Helical" evidence="2">
    <location>
        <begin position="45"/>
        <end position="65"/>
    </location>
</feature>
<feature type="transmembrane region" description="Helical" evidence="2">
    <location>
        <begin position="88"/>
        <end position="108"/>
    </location>
</feature>
<feature type="transmembrane region" description="Helical" evidence="2">
    <location>
        <begin position="185"/>
        <end position="205"/>
    </location>
</feature>
<feature type="transmembrane region" description="Helical" evidence="2">
    <location>
        <begin position="209"/>
        <end position="229"/>
    </location>
</feature>
<feature type="strand" evidence="5">
    <location>
        <begin position="40"/>
        <end position="42"/>
    </location>
</feature>
<feature type="turn" evidence="5">
    <location>
        <begin position="43"/>
        <end position="45"/>
    </location>
</feature>
<feature type="helix" evidence="5">
    <location>
        <begin position="46"/>
        <end position="60"/>
    </location>
</feature>
<feature type="strand" evidence="5">
    <location>
        <begin position="61"/>
        <end position="65"/>
    </location>
</feature>
<feature type="helix" evidence="5">
    <location>
        <begin position="66"/>
        <end position="76"/>
    </location>
</feature>
<feature type="strand" evidence="5">
    <location>
        <begin position="77"/>
        <end position="80"/>
    </location>
</feature>
<feature type="turn" evidence="5">
    <location>
        <begin position="85"/>
        <end position="87"/>
    </location>
</feature>
<feature type="helix" evidence="5">
    <location>
        <begin position="88"/>
        <end position="111"/>
    </location>
</feature>
<feature type="helix" evidence="5">
    <location>
        <begin position="113"/>
        <end position="116"/>
    </location>
</feature>
<feature type="strand" evidence="5">
    <location>
        <begin position="122"/>
        <end position="125"/>
    </location>
</feature>
<feature type="helix" evidence="5">
    <location>
        <begin position="126"/>
        <end position="141"/>
    </location>
</feature>
<feature type="helix" evidence="5">
    <location>
        <begin position="146"/>
        <end position="153"/>
    </location>
</feature>
<feature type="helix" evidence="5">
    <location>
        <begin position="167"/>
        <end position="206"/>
    </location>
</feature>
<feature type="helix" evidence="5">
    <location>
        <begin position="214"/>
        <end position="228"/>
    </location>
</feature>
<feature type="helix" evidence="5">
    <location>
        <begin position="231"/>
        <end position="242"/>
    </location>
</feature>
<keyword id="KW-0002">3D-structure</keyword>
<keyword id="KW-0975">Bacterial flagellum</keyword>
<keyword id="KW-1005">Bacterial flagellum biogenesis</keyword>
<keyword id="KW-1006">Bacterial flagellum protein export</keyword>
<keyword id="KW-0997">Cell inner membrane</keyword>
<keyword id="KW-1003">Cell membrane</keyword>
<keyword id="KW-0903">Direct protein sequencing</keyword>
<keyword id="KW-0472">Membrane</keyword>
<keyword id="KW-0653">Protein transport</keyword>
<keyword id="KW-1185">Reference proteome</keyword>
<keyword id="KW-0732">Signal</keyword>
<keyword id="KW-0812">Transmembrane</keyword>
<keyword id="KW-1133">Transmembrane helix</keyword>
<keyword id="KW-0813">Transport</keyword>
<reference key="1">
    <citation type="journal article" date="1997" name="J. Bacteriol.">
        <title>The FliO, FliP, FliQ, and FliR proteins of Salmonella typhimurium: putative components for flagellar assembly.</title>
        <authorList>
            <person name="Ohnishi K."/>
            <person name="Fan F."/>
            <person name="Schoenhals G.J."/>
            <person name="Kihara M."/>
            <person name="Macnab R.M."/>
        </authorList>
    </citation>
    <scope>NUCLEOTIDE SEQUENCE [GENOMIC DNA]</scope>
    <scope>PROTEIN SEQUENCE OF N-TERMINUS</scope>
    <source>
        <strain>LT2</strain>
    </source>
</reference>
<reference key="2">
    <citation type="journal article" date="2001" name="Nature">
        <title>Complete genome sequence of Salmonella enterica serovar Typhimurium LT2.</title>
        <authorList>
            <person name="McClelland M."/>
            <person name="Sanderson K.E."/>
            <person name="Spieth J."/>
            <person name="Clifton S.W."/>
            <person name="Latreille P."/>
            <person name="Courtney L."/>
            <person name="Porwollik S."/>
            <person name="Ali J."/>
            <person name="Dante M."/>
            <person name="Du F."/>
            <person name="Hou S."/>
            <person name="Layman D."/>
            <person name="Leonard S."/>
            <person name="Nguyen C."/>
            <person name="Scott K."/>
            <person name="Holmes A."/>
            <person name="Grewal N."/>
            <person name="Mulvaney E."/>
            <person name="Ryan E."/>
            <person name="Sun H."/>
            <person name="Florea L."/>
            <person name="Miller W."/>
            <person name="Stoneking T."/>
            <person name="Nhan M."/>
            <person name="Waterston R."/>
            <person name="Wilson R.K."/>
        </authorList>
    </citation>
    <scope>NUCLEOTIDE SEQUENCE [LARGE SCALE GENOMIC DNA]</scope>
    <source>
        <strain>LT2 / SGSC1412 / ATCC 700720</strain>
    </source>
</reference>
<comment type="function">
    <text evidence="1">Plays a role in the flagellum-specific transport system.</text>
</comment>
<comment type="subcellular location">
    <subcellularLocation>
        <location>Cell inner membrane</location>
        <topology>Multi-pass membrane protein</topology>
    </subcellularLocation>
    <subcellularLocation>
        <location>Bacterial flagellum basal body</location>
    </subcellularLocation>
</comment>
<comment type="miscellaneous">
    <text>For insertion of FliP into the membrane, cleavage of the signal peptide is important kinetically but not absolutely required.</text>
</comment>
<comment type="similarity">
    <text evidence="4">Belongs to the FliP/MopC/SpaP family.</text>
</comment>
<accession>P54700</accession>
<proteinExistence type="evidence at protein level"/>
<gene>
    <name type="primary">fliP</name>
    <name type="synonym">flaR</name>
    <name type="ordered locus">STM1979</name>
</gene>
<evidence type="ECO:0000250" key="1"/>
<evidence type="ECO:0000255" key="2"/>
<evidence type="ECO:0000269" key="3">
    <source>
    </source>
</evidence>
<evidence type="ECO:0000305" key="4"/>
<evidence type="ECO:0007829" key="5">
    <source>
        <dbReference type="PDB" id="7BIN"/>
    </source>
</evidence>
<sequence>MRRLLFLSLAGLWLFSPAAAAQLPGLISQPLAGGGQSWSLSVQTLVFITSLTFLPAILLMMTSFTRIIIVFGLLRNALGTPSAPPNQVLLGLALFLTFFIMSPVIDKIYVDAYQPFSEQKISMQEALDKGAQPLRAFMLRQTREADLALFARLANSGPLQGPEAVPMRILLPAYVTSELKTAFQIGFTIFIPFLIIDLVIASVLMALGMMMVPPATIALPFKLMLFVLVDGWQLLMGSLAQSFYS</sequence>
<dbReference type="EMBL" id="L49021">
    <property type="protein sequence ID" value="AAB81319.1"/>
    <property type="molecule type" value="Genomic_DNA"/>
</dbReference>
<dbReference type="EMBL" id="AE006468">
    <property type="protein sequence ID" value="AAL20891.1"/>
    <property type="molecule type" value="Genomic_DNA"/>
</dbReference>
<dbReference type="PIR" id="S78698">
    <property type="entry name" value="S78698"/>
</dbReference>
<dbReference type="RefSeq" id="NP_460932.1">
    <property type="nucleotide sequence ID" value="NC_003197.2"/>
</dbReference>
<dbReference type="RefSeq" id="WP_001253410.1">
    <property type="nucleotide sequence ID" value="NC_003197.2"/>
</dbReference>
<dbReference type="PDB" id="6F2D">
    <property type="method" value="EM"/>
    <property type="resolution" value="4.20 A"/>
    <property type="chains" value="A/B/C/D/E=1-245"/>
</dbReference>
<dbReference type="PDB" id="7BIN">
    <property type="method" value="EM"/>
    <property type="resolution" value="3.20 A"/>
    <property type="chains" value="A/B/C/D/E=1-245"/>
</dbReference>
<dbReference type="PDB" id="7CG4">
    <property type="method" value="EM"/>
    <property type="resolution" value="3.60 A"/>
    <property type="chains" value="r/s/t/u/v=1-245"/>
</dbReference>
<dbReference type="PDB" id="7CGO">
    <property type="method" value="EM"/>
    <property type="resolution" value="3.90 A"/>
    <property type="chains" value="CF/w/x/y/z=1-245"/>
</dbReference>
<dbReference type="PDB" id="7E80">
    <property type="method" value="EM"/>
    <property type="resolution" value="3.67 A"/>
    <property type="chains" value="CF/w/x/y/z=1-245"/>
</dbReference>
<dbReference type="PDB" id="8WK3">
    <property type="method" value="EM"/>
    <property type="resolution" value="3.30 A"/>
    <property type="chains" value="F/G/H/I/J=1-245"/>
</dbReference>
<dbReference type="PDB" id="8WKK">
    <property type="method" value="EM"/>
    <property type="resolution" value="3.30 A"/>
    <property type="chains" value="F/G/H/I/J=1-245"/>
</dbReference>
<dbReference type="PDB" id="8WKQ">
    <property type="method" value="EM"/>
    <property type="resolution" value="3.80 A"/>
    <property type="chains" value="F/G/H/I/J=1-245"/>
</dbReference>
<dbReference type="PDB" id="8WL2">
    <property type="method" value="EM"/>
    <property type="resolution" value="3.40 A"/>
    <property type="chains" value="Au/Av/Aw/Ax/Ay=1-245"/>
</dbReference>
<dbReference type="PDB" id="8WLH">
    <property type="method" value="EM"/>
    <property type="resolution" value="3.70 A"/>
    <property type="chains" value="F/G/H/I/J=1-245"/>
</dbReference>
<dbReference type="PDB" id="8WLN">
    <property type="method" value="EM"/>
    <property type="resolution" value="4.30 A"/>
    <property type="chains" value="F/G/H/I/J=1-245"/>
</dbReference>
<dbReference type="PDB" id="8WLQ">
    <property type="method" value="EM"/>
    <property type="resolution" value="3.80 A"/>
    <property type="chains" value="F/G/H/I/J=1-245"/>
</dbReference>
<dbReference type="PDB" id="8WLT">
    <property type="method" value="EM"/>
    <property type="resolution" value="4.10 A"/>
    <property type="chains" value="Au/Av/Aw/Ax/Ay=1-245"/>
</dbReference>
<dbReference type="PDB" id="8WO5">
    <property type="method" value="EM"/>
    <property type="resolution" value="7.40 A"/>
    <property type="chains" value="Au/Av/Aw/Ax/Ay=1-245"/>
</dbReference>
<dbReference type="PDB" id="8WOE">
    <property type="method" value="EM"/>
    <property type="resolution" value="4.30 A"/>
    <property type="chains" value="Au/Av/Aw/Ax/Ay=1-245"/>
</dbReference>
<dbReference type="PDBsum" id="6F2D"/>
<dbReference type="PDBsum" id="7BIN"/>
<dbReference type="PDBsum" id="7CG4"/>
<dbReference type="PDBsum" id="7CGO"/>
<dbReference type="PDBsum" id="7E80"/>
<dbReference type="PDBsum" id="8WK3"/>
<dbReference type="PDBsum" id="8WKK"/>
<dbReference type="PDBsum" id="8WKQ"/>
<dbReference type="PDBsum" id="8WL2"/>
<dbReference type="PDBsum" id="8WLH"/>
<dbReference type="PDBsum" id="8WLN"/>
<dbReference type="PDBsum" id="8WLQ"/>
<dbReference type="PDBsum" id="8WLT"/>
<dbReference type="PDBsum" id="8WO5"/>
<dbReference type="PDBsum" id="8WOE"/>
<dbReference type="EMDB" id="EMD-30350"/>
<dbReference type="EMDB" id="EMD-30359"/>
<dbReference type="EMDB" id="EMD-31006"/>
<dbReference type="EMDB" id="EMD-37594"/>
<dbReference type="EMDB" id="EMD-37601"/>
<dbReference type="EMDB" id="EMD-37605"/>
<dbReference type="EMDB" id="EMD-37611"/>
<dbReference type="EMDB" id="EMD-37619"/>
<dbReference type="EMDB" id="EMD-37625"/>
<dbReference type="EMDB" id="EMD-37628"/>
<dbReference type="EMDB" id="EMD-37630"/>
<dbReference type="EMDB" id="EMD-37679"/>
<dbReference type="EMDB" id="EMD-37684"/>
<dbReference type="SMR" id="P54700"/>
<dbReference type="STRING" id="99287.STM1979"/>
<dbReference type="TCDB" id="3.A.6.2.1">
    <property type="family name" value="the type iii (virulence-related) secretory pathway (iiisp) family"/>
</dbReference>
<dbReference type="PaxDb" id="99287-STM1979"/>
<dbReference type="GeneID" id="1253500"/>
<dbReference type="KEGG" id="stm:STM1979"/>
<dbReference type="PATRIC" id="fig|99287.12.peg.2096"/>
<dbReference type="HOGENOM" id="CLU_042028_0_1_6"/>
<dbReference type="OMA" id="MMMLPPI"/>
<dbReference type="PhylomeDB" id="P54700"/>
<dbReference type="BioCyc" id="SENT99287:STM1979-MONOMER"/>
<dbReference type="Proteomes" id="UP000001014">
    <property type="component" value="Chromosome"/>
</dbReference>
<dbReference type="GO" id="GO:0009425">
    <property type="term" value="C:bacterial-type flagellum basal body"/>
    <property type="evidence" value="ECO:0007669"/>
    <property type="project" value="UniProtKB-SubCell"/>
</dbReference>
<dbReference type="GO" id="GO:0005886">
    <property type="term" value="C:plasma membrane"/>
    <property type="evidence" value="ECO:0000318"/>
    <property type="project" value="GO_Central"/>
</dbReference>
<dbReference type="GO" id="GO:0044780">
    <property type="term" value="P:bacterial-type flagellum assembly"/>
    <property type="evidence" value="ECO:0000318"/>
    <property type="project" value="GO_Central"/>
</dbReference>
<dbReference type="GO" id="GO:0071978">
    <property type="term" value="P:bacterial-type flagellum-dependent swarming motility"/>
    <property type="evidence" value="ECO:0000318"/>
    <property type="project" value="GO_Central"/>
</dbReference>
<dbReference type="GO" id="GO:0009306">
    <property type="term" value="P:protein secretion"/>
    <property type="evidence" value="ECO:0007669"/>
    <property type="project" value="InterPro"/>
</dbReference>
<dbReference type="InterPro" id="IPR005837">
    <property type="entry name" value="FliP"/>
</dbReference>
<dbReference type="InterPro" id="IPR005838">
    <property type="entry name" value="T3SS_IM_P"/>
</dbReference>
<dbReference type="NCBIfam" id="TIGR01103">
    <property type="entry name" value="fliP"/>
    <property type="match status" value="1"/>
</dbReference>
<dbReference type="NCBIfam" id="NF009438">
    <property type="entry name" value="PRK12797.1"/>
    <property type="match status" value="1"/>
</dbReference>
<dbReference type="PANTHER" id="PTHR30587">
    <property type="entry name" value="FLAGELLAR BIOSYNTHETIC PROTEIN FLIP"/>
    <property type="match status" value="1"/>
</dbReference>
<dbReference type="PANTHER" id="PTHR30587:SF0">
    <property type="entry name" value="FLAGELLAR BIOSYNTHETIC PROTEIN FLIP"/>
    <property type="match status" value="1"/>
</dbReference>
<dbReference type="Pfam" id="PF00813">
    <property type="entry name" value="FliP"/>
    <property type="match status" value="1"/>
</dbReference>
<dbReference type="PRINTS" id="PR00951">
    <property type="entry name" value="FLGBIOSNFLIP"/>
</dbReference>
<dbReference type="PRINTS" id="PR01302">
    <property type="entry name" value="TYPE3IMPPROT"/>
</dbReference>
<dbReference type="PROSITE" id="PS01060">
    <property type="entry name" value="FLIP_1"/>
    <property type="match status" value="1"/>
</dbReference>
<dbReference type="PROSITE" id="PS01061">
    <property type="entry name" value="FLIP_2"/>
    <property type="match status" value="1"/>
</dbReference>
<protein>
    <recommendedName>
        <fullName>Flagellar biosynthetic protein FliP</fullName>
    </recommendedName>
</protein>
<organism>
    <name type="scientific">Salmonella typhimurium (strain LT2 / SGSC1412 / ATCC 700720)</name>
    <dbReference type="NCBI Taxonomy" id="99287"/>
    <lineage>
        <taxon>Bacteria</taxon>
        <taxon>Pseudomonadati</taxon>
        <taxon>Pseudomonadota</taxon>
        <taxon>Gammaproteobacteria</taxon>
        <taxon>Enterobacterales</taxon>
        <taxon>Enterobacteriaceae</taxon>
        <taxon>Salmonella</taxon>
    </lineage>
</organism>